<accession>Q8VY81</accession>
<accession>Q9FX46</accession>
<gene>
    <name type="primary">NUDT21</name>
    <name type="synonym">NUDX21</name>
    <name type="ordered locus">At1g73540</name>
    <name type="ORF">T9L24.30</name>
</gene>
<name>NUD21_ARATH</name>
<organism>
    <name type="scientific">Arabidopsis thaliana</name>
    <name type="common">Mouse-ear cress</name>
    <dbReference type="NCBI Taxonomy" id="3702"/>
    <lineage>
        <taxon>Eukaryota</taxon>
        <taxon>Viridiplantae</taxon>
        <taxon>Streptophyta</taxon>
        <taxon>Embryophyta</taxon>
        <taxon>Tracheophyta</taxon>
        <taxon>Spermatophyta</taxon>
        <taxon>Magnoliopsida</taxon>
        <taxon>eudicotyledons</taxon>
        <taxon>Gunneridae</taxon>
        <taxon>Pentapetalae</taxon>
        <taxon>rosids</taxon>
        <taxon>malvids</taxon>
        <taxon>Brassicales</taxon>
        <taxon>Brassicaceae</taxon>
        <taxon>Camelineae</taxon>
        <taxon>Arabidopsis</taxon>
    </lineage>
</organism>
<protein>
    <recommendedName>
        <fullName>Nudix hydrolase 21, chloroplastic</fullName>
        <shortName>AtNUDT21</shortName>
        <ecNumber>3.6.1.-</ecNumber>
    </recommendedName>
</protein>
<dbReference type="EC" id="3.6.1.-"/>
<dbReference type="EMBL" id="AC012396">
    <property type="protein sequence ID" value="AAG30977.1"/>
    <property type="status" value="ALT_INIT"/>
    <property type="molecule type" value="Genomic_DNA"/>
</dbReference>
<dbReference type="EMBL" id="CP002684">
    <property type="protein sequence ID" value="AEE35473.1"/>
    <property type="molecule type" value="Genomic_DNA"/>
</dbReference>
<dbReference type="EMBL" id="AY072369">
    <property type="protein sequence ID" value="AAL62361.1"/>
    <property type="molecule type" value="mRNA"/>
</dbReference>
<dbReference type="EMBL" id="BT002080">
    <property type="protein sequence ID" value="AAN72091.1"/>
    <property type="molecule type" value="mRNA"/>
</dbReference>
<dbReference type="PIR" id="B96762">
    <property type="entry name" value="B96762"/>
</dbReference>
<dbReference type="RefSeq" id="NP_177495.2">
    <property type="nucleotide sequence ID" value="NM_106012.6"/>
</dbReference>
<dbReference type="SMR" id="Q8VY81"/>
<dbReference type="FunCoup" id="Q8VY81">
    <property type="interactions" value="1382"/>
</dbReference>
<dbReference type="STRING" id="3702.Q8VY81"/>
<dbReference type="GlyGen" id="Q8VY81">
    <property type="glycosylation" value="1 site"/>
</dbReference>
<dbReference type="PaxDb" id="3702-AT1G73540.1"/>
<dbReference type="ProteomicsDB" id="234939"/>
<dbReference type="EnsemblPlants" id="AT1G73540.1">
    <property type="protein sequence ID" value="AT1G73540.1"/>
    <property type="gene ID" value="AT1G73540"/>
</dbReference>
<dbReference type="GeneID" id="843688"/>
<dbReference type="Gramene" id="AT1G73540.1">
    <property type="protein sequence ID" value="AT1G73540.1"/>
    <property type="gene ID" value="AT1G73540"/>
</dbReference>
<dbReference type="KEGG" id="ath:AT1G73540"/>
<dbReference type="Araport" id="AT1G73540"/>
<dbReference type="TAIR" id="AT1G73540">
    <property type="gene designation" value="NUDT21"/>
</dbReference>
<dbReference type="eggNOG" id="KOG2839">
    <property type="taxonomic scope" value="Eukaryota"/>
</dbReference>
<dbReference type="HOGENOM" id="CLU_037162_5_2_1"/>
<dbReference type="InParanoid" id="Q8VY81"/>
<dbReference type="OMA" id="HRTQVWV"/>
<dbReference type="PhylomeDB" id="Q8VY81"/>
<dbReference type="BioCyc" id="ARA:AT1G73540-MONOMER"/>
<dbReference type="PRO" id="PR:Q8VY81"/>
<dbReference type="Proteomes" id="UP000006548">
    <property type="component" value="Chromosome 1"/>
</dbReference>
<dbReference type="ExpressionAtlas" id="Q8VY81">
    <property type="expression patterns" value="baseline and differential"/>
</dbReference>
<dbReference type="GO" id="GO:0009507">
    <property type="term" value="C:chloroplast"/>
    <property type="evidence" value="ECO:0007669"/>
    <property type="project" value="UniProtKB-SubCell"/>
</dbReference>
<dbReference type="GO" id="GO:0046872">
    <property type="term" value="F:metal ion binding"/>
    <property type="evidence" value="ECO:0007669"/>
    <property type="project" value="UniProtKB-KW"/>
</dbReference>
<dbReference type="GO" id="GO:0016462">
    <property type="term" value="F:pyrophosphatase activity"/>
    <property type="evidence" value="ECO:0007669"/>
    <property type="project" value="InterPro"/>
</dbReference>
<dbReference type="CDD" id="cd04666">
    <property type="entry name" value="NUDIX_DIPP2_like_Nudt4"/>
    <property type="match status" value="1"/>
</dbReference>
<dbReference type="FunFam" id="3.90.79.10:FF:000022">
    <property type="entry name" value="Nudix hydrolase 17, mitochondrial"/>
    <property type="match status" value="1"/>
</dbReference>
<dbReference type="Gene3D" id="3.90.79.10">
    <property type="entry name" value="Nucleoside Triphosphate Pyrophosphohydrolase"/>
    <property type="match status" value="1"/>
</dbReference>
<dbReference type="InterPro" id="IPR047198">
    <property type="entry name" value="DDP-like_NUDIX"/>
</dbReference>
<dbReference type="InterPro" id="IPR015797">
    <property type="entry name" value="NUDIX_hydrolase-like_dom_sf"/>
</dbReference>
<dbReference type="InterPro" id="IPR020084">
    <property type="entry name" value="NUDIX_hydrolase_CS"/>
</dbReference>
<dbReference type="InterPro" id="IPR000086">
    <property type="entry name" value="NUDIX_hydrolase_dom"/>
</dbReference>
<dbReference type="PANTHER" id="PTHR12629">
    <property type="entry name" value="DIPHOSPHOINOSITOL POLYPHOSPHATE PHOSPHOHYDROLASE"/>
    <property type="match status" value="1"/>
</dbReference>
<dbReference type="PANTHER" id="PTHR12629:SF52">
    <property type="entry name" value="NUDIX HYDROLASE 21, CHLOROPLASTIC"/>
    <property type="match status" value="1"/>
</dbReference>
<dbReference type="Pfam" id="PF00293">
    <property type="entry name" value="NUDIX"/>
    <property type="match status" value="1"/>
</dbReference>
<dbReference type="SUPFAM" id="SSF55811">
    <property type="entry name" value="Nudix"/>
    <property type="match status" value="1"/>
</dbReference>
<dbReference type="PROSITE" id="PS51462">
    <property type="entry name" value="NUDIX"/>
    <property type="match status" value="1"/>
</dbReference>
<dbReference type="PROSITE" id="PS00893">
    <property type="entry name" value="NUDIX_BOX"/>
    <property type="match status" value="1"/>
</dbReference>
<comment type="function">
    <text evidence="1">Probably mediates the hydrolysis of some nucleoside diphosphate derivatives.</text>
</comment>
<comment type="cofactor">
    <cofactor evidence="1">
        <name>Mg(2+)</name>
        <dbReference type="ChEBI" id="CHEBI:18420"/>
    </cofactor>
    <cofactor evidence="1">
        <name>Mn(2+)</name>
        <dbReference type="ChEBI" id="CHEBI:29035"/>
    </cofactor>
</comment>
<comment type="subcellular location">
    <subcellularLocation>
        <location evidence="5">Plastid</location>
        <location evidence="5">Chloroplast</location>
    </subcellularLocation>
</comment>
<comment type="tissue specificity">
    <text evidence="4">Expressed in roots, leaves, stems and inflorescences.</text>
</comment>
<comment type="disruption phenotype">
    <text evidence="4">No visible phenotype under normal growth conditions.</text>
</comment>
<comment type="similarity">
    <text evidence="5">Belongs to the Nudix hydrolase family.</text>
</comment>
<comment type="sequence caution" evidence="5">
    <conflict type="erroneous initiation">
        <sequence resource="EMBL-CDS" id="AAG30977"/>
    </conflict>
</comment>
<proteinExistence type="evidence at transcript level"/>
<reference key="1">
    <citation type="journal article" date="2000" name="Nature">
        <title>Sequence and analysis of chromosome 1 of the plant Arabidopsis thaliana.</title>
        <authorList>
            <person name="Theologis A."/>
            <person name="Ecker J.R."/>
            <person name="Palm C.J."/>
            <person name="Federspiel N.A."/>
            <person name="Kaul S."/>
            <person name="White O."/>
            <person name="Alonso J."/>
            <person name="Altafi H."/>
            <person name="Araujo R."/>
            <person name="Bowman C.L."/>
            <person name="Brooks S.Y."/>
            <person name="Buehler E."/>
            <person name="Chan A."/>
            <person name="Chao Q."/>
            <person name="Chen H."/>
            <person name="Cheuk R.F."/>
            <person name="Chin C.W."/>
            <person name="Chung M.K."/>
            <person name="Conn L."/>
            <person name="Conway A.B."/>
            <person name="Conway A.R."/>
            <person name="Creasy T.H."/>
            <person name="Dewar K."/>
            <person name="Dunn P."/>
            <person name="Etgu P."/>
            <person name="Feldblyum T.V."/>
            <person name="Feng J.-D."/>
            <person name="Fong B."/>
            <person name="Fujii C.Y."/>
            <person name="Gill J.E."/>
            <person name="Goldsmith A.D."/>
            <person name="Haas B."/>
            <person name="Hansen N.F."/>
            <person name="Hughes B."/>
            <person name="Huizar L."/>
            <person name="Hunter J.L."/>
            <person name="Jenkins J."/>
            <person name="Johnson-Hopson C."/>
            <person name="Khan S."/>
            <person name="Khaykin E."/>
            <person name="Kim C.J."/>
            <person name="Koo H.L."/>
            <person name="Kremenetskaia I."/>
            <person name="Kurtz D.B."/>
            <person name="Kwan A."/>
            <person name="Lam B."/>
            <person name="Langin-Hooper S."/>
            <person name="Lee A."/>
            <person name="Lee J.M."/>
            <person name="Lenz C.A."/>
            <person name="Li J.H."/>
            <person name="Li Y.-P."/>
            <person name="Lin X."/>
            <person name="Liu S.X."/>
            <person name="Liu Z.A."/>
            <person name="Luros J.S."/>
            <person name="Maiti R."/>
            <person name="Marziali A."/>
            <person name="Militscher J."/>
            <person name="Miranda M."/>
            <person name="Nguyen M."/>
            <person name="Nierman W.C."/>
            <person name="Osborne B.I."/>
            <person name="Pai G."/>
            <person name="Peterson J."/>
            <person name="Pham P.K."/>
            <person name="Rizzo M."/>
            <person name="Rooney T."/>
            <person name="Rowley D."/>
            <person name="Sakano H."/>
            <person name="Salzberg S.L."/>
            <person name="Schwartz J.R."/>
            <person name="Shinn P."/>
            <person name="Southwick A.M."/>
            <person name="Sun H."/>
            <person name="Tallon L.J."/>
            <person name="Tambunga G."/>
            <person name="Toriumi M.J."/>
            <person name="Town C.D."/>
            <person name="Utterback T."/>
            <person name="Van Aken S."/>
            <person name="Vaysberg M."/>
            <person name="Vysotskaia V.S."/>
            <person name="Walker M."/>
            <person name="Wu D."/>
            <person name="Yu G."/>
            <person name="Fraser C.M."/>
            <person name="Venter J.C."/>
            <person name="Davis R.W."/>
        </authorList>
    </citation>
    <scope>NUCLEOTIDE SEQUENCE [LARGE SCALE GENOMIC DNA]</scope>
    <source>
        <strain>cv. Columbia</strain>
    </source>
</reference>
<reference key="2">
    <citation type="journal article" date="2017" name="Plant J.">
        <title>Araport11: a complete reannotation of the Arabidopsis thaliana reference genome.</title>
        <authorList>
            <person name="Cheng C.Y."/>
            <person name="Krishnakumar V."/>
            <person name="Chan A.P."/>
            <person name="Thibaud-Nissen F."/>
            <person name="Schobel S."/>
            <person name="Town C.D."/>
        </authorList>
    </citation>
    <scope>GENOME REANNOTATION</scope>
    <source>
        <strain>cv. Columbia</strain>
    </source>
</reference>
<reference key="3">
    <citation type="journal article" date="2003" name="Science">
        <title>Empirical analysis of transcriptional activity in the Arabidopsis genome.</title>
        <authorList>
            <person name="Yamada K."/>
            <person name="Lim J."/>
            <person name="Dale J.M."/>
            <person name="Chen H."/>
            <person name="Shinn P."/>
            <person name="Palm C.J."/>
            <person name="Southwick A.M."/>
            <person name="Wu H.C."/>
            <person name="Kim C.J."/>
            <person name="Nguyen M."/>
            <person name="Pham P.K."/>
            <person name="Cheuk R.F."/>
            <person name="Karlin-Newmann G."/>
            <person name="Liu S.X."/>
            <person name="Lam B."/>
            <person name="Sakano H."/>
            <person name="Wu T."/>
            <person name="Yu G."/>
            <person name="Miranda M."/>
            <person name="Quach H.L."/>
            <person name="Tripp M."/>
            <person name="Chang C.H."/>
            <person name="Lee J.M."/>
            <person name="Toriumi M.J."/>
            <person name="Chan M.M."/>
            <person name="Tang C.C."/>
            <person name="Onodera C.S."/>
            <person name="Deng J.M."/>
            <person name="Akiyama K."/>
            <person name="Ansari Y."/>
            <person name="Arakawa T."/>
            <person name="Banh J."/>
            <person name="Banno F."/>
            <person name="Bowser L."/>
            <person name="Brooks S.Y."/>
            <person name="Carninci P."/>
            <person name="Chao Q."/>
            <person name="Choy N."/>
            <person name="Enju A."/>
            <person name="Goldsmith A.D."/>
            <person name="Gurjal M."/>
            <person name="Hansen N.F."/>
            <person name="Hayashizaki Y."/>
            <person name="Johnson-Hopson C."/>
            <person name="Hsuan V.W."/>
            <person name="Iida K."/>
            <person name="Karnes M."/>
            <person name="Khan S."/>
            <person name="Koesema E."/>
            <person name="Ishida J."/>
            <person name="Jiang P.X."/>
            <person name="Jones T."/>
            <person name="Kawai J."/>
            <person name="Kamiya A."/>
            <person name="Meyers C."/>
            <person name="Nakajima M."/>
            <person name="Narusaka M."/>
            <person name="Seki M."/>
            <person name="Sakurai T."/>
            <person name="Satou M."/>
            <person name="Tamse R."/>
            <person name="Vaysberg M."/>
            <person name="Wallender E.K."/>
            <person name="Wong C."/>
            <person name="Yamamura Y."/>
            <person name="Yuan S."/>
            <person name="Shinozaki K."/>
            <person name="Davis R.W."/>
            <person name="Theologis A."/>
            <person name="Ecker J.R."/>
        </authorList>
    </citation>
    <scope>NUCLEOTIDE SEQUENCE [LARGE SCALE MRNA]</scope>
    <source>
        <strain>cv. Columbia</strain>
    </source>
</reference>
<reference key="4">
    <citation type="journal article" date="2005" name="J. Biol. Chem.">
        <title>Comprehensive analysis of cytosolic nudix hydrolases in Arabidopsis thaliana.</title>
        <authorList>
            <person name="Ogawa T."/>
            <person name="Ueda Y."/>
            <person name="Yoshimura K."/>
            <person name="Shigeoka S."/>
        </authorList>
    </citation>
    <scope>NOMENCLATURE</scope>
</reference>
<reference key="5">
    <citation type="journal article" date="2008" name="Plant Physiol.">
        <title>Molecular characterization of organelle-type Nudix hydrolases in Arabidopsis.</title>
        <authorList>
            <person name="Ogawa T."/>
            <person name="Yoshimura K."/>
            <person name="Miyake H."/>
            <person name="Ishikawa K."/>
            <person name="Ito D."/>
            <person name="Tanabe N."/>
            <person name="Shigeoka S."/>
        </authorList>
    </citation>
    <scope>TISSUE SPECIFICITY</scope>
    <scope>DISRUPTION PHENOTYPE</scope>
</reference>
<keyword id="KW-0150">Chloroplast</keyword>
<keyword id="KW-0378">Hydrolase</keyword>
<keyword id="KW-0460">Magnesium</keyword>
<keyword id="KW-0464">Manganese</keyword>
<keyword id="KW-0479">Metal-binding</keyword>
<keyword id="KW-0934">Plastid</keyword>
<keyword id="KW-1185">Reference proteome</keyword>
<keyword id="KW-0809">Transit peptide</keyword>
<sequence>MISLFISNFSNLSNLSPTFDNMNMNIPSKKIVPVPTPSEKVVSLVSRTGRDLQRYNTAGYRQVVGCVPYRYKKHGGGEIEVLLISAQKKGKGMLLPKGGWEIDESIEEAALRETIEEAGVTGQLEESLGKWQYKSKRHTMIHDGHMFPLLVSQQFEIWPESEFRQRKWVSLSEAIELCQNSWMREALEAFINRKCQTQ</sequence>
<evidence type="ECO:0000250" key="1"/>
<evidence type="ECO:0000255" key="2"/>
<evidence type="ECO:0000255" key="3">
    <source>
        <dbReference type="PROSITE-ProRule" id="PRU00794"/>
    </source>
</evidence>
<evidence type="ECO:0000269" key="4">
    <source>
    </source>
</evidence>
<evidence type="ECO:0000305" key="5"/>
<feature type="transit peptide" description="Chloroplast" evidence="2">
    <location>
        <begin position="1"/>
        <end position="37"/>
    </location>
</feature>
<feature type="chain" id="PRO_0000019963" description="Nudix hydrolase 21, chloroplastic">
    <location>
        <begin position="38"/>
        <end position="198"/>
    </location>
</feature>
<feature type="domain" description="Nudix hydrolase" evidence="3">
    <location>
        <begin position="59"/>
        <end position="191"/>
    </location>
</feature>
<feature type="short sequence motif" description="Nudix box">
    <location>
        <begin position="98"/>
        <end position="119"/>
    </location>
</feature>
<feature type="binding site" evidence="1">
    <location>
        <position position="113"/>
    </location>
    <ligand>
        <name>Mg(2+)</name>
        <dbReference type="ChEBI" id="CHEBI:18420"/>
    </ligand>
</feature>
<feature type="binding site" evidence="1">
    <location>
        <position position="117"/>
    </location>
    <ligand>
        <name>Mg(2+)</name>
        <dbReference type="ChEBI" id="CHEBI:18420"/>
    </ligand>
</feature>